<feature type="chain" id="PRO_0000048670" description="Sex-determining region Y protein">
    <location>
        <begin position="1"/>
        <end position="223"/>
    </location>
</feature>
<feature type="DNA-binding region" description="HMG box" evidence="3">
    <location>
        <begin position="54"/>
        <end position="122"/>
    </location>
</feature>
<feature type="region of interest" description="Disordered" evidence="4">
    <location>
        <begin position="23"/>
        <end position="55"/>
    </location>
</feature>
<feature type="compositionally biased region" description="Polar residues" evidence="4">
    <location>
        <begin position="23"/>
        <end position="35"/>
    </location>
</feature>
<feature type="compositionally biased region" description="Basic and acidic residues" evidence="4">
    <location>
        <begin position="38"/>
        <end position="55"/>
    </location>
</feature>
<proteinExistence type="evidence at transcript level"/>
<gene>
    <name type="primary">SRY</name>
    <name type="synonym">TDF</name>
</gene>
<keyword id="KW-0007">Acetylation</keyword>
<keyword id="KW-0010">Activator</keyword>
<keyword id="KW-0112">Calmodulin-binding</keyword>
<keyword id="KW-0963">Cytoplasm</keyword>
<keyword id="KW-0221">Differentiation</keyword>
<keyword id="KW-0238">DNA-binding</keyword>
<keyword id="KW-0539">Nucleus</keyword>
<keyword id="KW-1185">Reference proteome</keyword>
<keyword id="KW-0678">Repressor</keyword>
<keyword id="KW-0726">Sexual differentiation</keyword>
<keyword id="KW-0804">Transcription</keyword>
<keyword id="KW-0805">Transcription regulation</keyword>
<sequence>MSRVSNSDNYSLAGQQHTVLGSGRTSSLLWTSNPGSHFRSETRGNGRENGQDRVKRPMNAFMVWSRDHRRKVALENPQLQNSEISKRLGCQWKMLTEAEKLPFFEEAQRLRAMHQEKYPDYKYRPRRKAKMPQKSDKPLPQTPLLHCAGRRTYTSTSGCPFLIHGRLFLRATQSQTGGAVKPFAAGATAISALQQELSQQHRTLRCHSGNVGYADIRRRSLSL</sequence>
<reference key="1">
    <citation type="journal article" date="1999" name="J. Vet. Med. Sci.">
        <title>Linear SRY transcript in equine testis.</title>
        <authorList>
            <person name="Hasegawa T."/>
            <person name="Ishida M."/>
            <person name="Harigaya T."/>
            <person name="Sato F."/>
            <person name="Ishida N."/>
            <person name="Mukoyama H."/>
        </authorList>
    </citation>
    <scope>NUCLEOTIDE SEQUENCE [MRNA]</scope>
    <source>
        <strain>Thoroughbred</strain>
        <tissue>Testis</tissue>
    </source>
</reference>
<reference key="2">
    <citation type="journal article" date="1997" name="Equine Vet. J.">
        <title>Sry-negative XX true hermaphroditism in a Pasa Fino horse.</title>
        <authorList>
            <person name="Meyers-Wallen V.N."/>
            <person name="Hurtgen J."/>
            <person name="Schlafer D."/>
            <person name="Tulleners E."/>
            <person name="Cleland W.R."/>
            <person name="Ruth G.R."/>
            <person name="Acland G.M."/>
        </authorList>
    </citation>
    <scope>NUCLEOTIDE SEQUENCE [GENOMIC DNA] OF 54-108</scope>
</reference>
<reference key="3">
    <citation type="journal article" date="1993" name="Mol. Ecol.">
        <title>Primers for the differential amplification of the sex-determining region Y gene in a range of mammal species.</title>
        <authorList>
            <person name="Griffiths R."/>
            <person name="Tiwari B."/>
        </authorList>
    </citation>
    <scope>NUCLEOTIDE SEQUENCE [GENOMIC DNA] OF 62-116</scope>
</reference>
<comment type="function">
    <text evidence="1 2">Transcriptional regulator that controls a genetic switch in male development. It is necessary and sufficient for initiating male sex determination by directing the development of supporting cell precursors (pre-Sertoli cells) as Sertoli rather than granulosa cells. Involved in different aspects of gene regulation including promoter activation or repression. Binds to the DNA consensus sequence 5'-[AT]AACAA[AT]-3'. SRY HMG box recognizes DNA by partial intercalation in the minor groove and promotes DNA bending. Also involved in pre-mRNA splicing (By similarity). In male adult brain involved in the maintenance of motor functions of dopaminergic neurons (By similarity).</text>
</comment>
<comment type="subunit">
    <text evidence="2">Interacts with CALM, EP300, HDAC3, KPNB1, ZNF208 isoform KRAB-O, PARP1, SLC9A3R2 and WT1. The interaction with EP300 modulates its DNA-binding activity. The interaction with KPNB1 is sensitive to dissociation by Ran in the GTP-bound form. Interaction with PARP1 impaired its DNA-binding activity.</text>
</comment>
<comment type="subcellular location">
    <subcellularLocation>
        <location evidence="2">Nucleus speckle</location>
    </subcellularLocation>
    <subcellularLocation>
        <location evidence="2">Cytoplasm</location>
    </subcellularLocation>
    <subcellularLocation>
        <location evidence="2">Nucleus</location>
    </subcellularLocation>
</comment>
<comment type="PTM">
    <text evidence="2">Acetylation of Lys-130 contributes to its nuclear localization and enhances its interaction with KPNB1. Deacetylated by HDAC3.</text>
</comment>
<comment type="similarity">
    <text evidence="5">Belongs to the SRY family.</text>
</comment>
<comment type="online information" name="Protein Spotlight">
    <link uri="https://www.proteinspotlight.org/back_issues/080"/>
    <text>The tenuous nature of sex - Issue 80 of March 2007</text>
</comment>
<organism>
    <name type="scientific">Equus caballus</name>
    <name type="common">Horse</name>
    <dbReference type="NCBI Taxonomy" id="9796"/>
    <lineage>
        <taxon>Eukaryota</taxon>
        <taxon>Metazoa</taxon>
        <taxon>Chordata</taxon>
        <taxon>Craniata</taxon>
        <taxon>Vertebrata</taxon>
        <taxon>Euteleostomi</taxon>
        <taxon>Mammalia</taxon>
        <taxon>Eutheria</taxon>
        <taxon>Laurasiatheria</taxon>
        <taxon>Perissodactyla</taxon>
        <taxon>Equidae</taxon>
        <taxon>Equus</taxon>
    </lineage>
</organism>
<name>SRY_HORSE</name>
<accession>P36389</accession>
<accession>O18729</accession>
<accession>P79354</accession>
<protein>
    <recommendedName>
        <fullName>Sex-determining region Y protein</fullName>
    </recommendedName>
    <alternativeName>
        <fullName>Testis-determining factor</fullName>
    </alternativeName>
</protein>
<dbReference type="EMBL" id="AB004572">
    <property type="protein sequence ID" value="BAA22428.1"/>
    <property type="molecule type" value="mRNA"/>
</dbReference>
<dbReference type="EMBL" id="U66067">
    <property type="protein sequence ID" value="AAC10937.1"/>
    <property type="molecule type" value="Genomic_DNA"/>
</dbReference>
<dbReference type="EMBL" id="Z26908">
    <property type="protein sequence ID" value="CAA81534.1"/>
    <property type="molecule type" value="Genomic_DNA"/>
</dbReference>
<dbReference type="RefSeq" id="NP_001075279.1">
    <property type="nucleotide sequence ID" value="NM_001081810.1"/>
</dbReference>
<dbReference type="SMR" id="P36389"/>
<dbReference type="FunCoup" id="P36389">
    <property type="interactions" value="12"/>
</dbReference>
<dbReference type="InParanoid" id="P36389"/>
<dbReference type="Proteomes" id="UP000002281">
    <property type="component" value="Unplaced"/>
</dbReference>
<dbReference type="GO" id="GO:0005737">
    <property type="term" value="C:cytoplasm"/>
    <property type="evidence" value="ECO:0007669"/>
    <property type="project" value="UniProtKB-SubCell"/>
</dbReference>
<dbReference type="GO" id="GO:0016607">
    <property type="term" value="C:nuclear speck"/>
    <property type="evidence" value="ECO:0007669"/>
    <property type="project" value="UniProtKB-SubCell"/>
</dbReference>
<dbReference type="GO" id="GO:0005634">
    <property type="term" value="C:nucleus"/>
    <property type="evidence" value="ECO:0000250"/>
    <property type="project" value="UniProtKB"/>
</dbReference>
<dbReference type="GO" id="GO:0005516">
    <property type="term" value="F:calmodulin binding"/>
    <property type="evidence" value="ECO:0007669"/>
    <property type="project" value="UniProtKB-KW"/>
</dbReference>
<dbReference type="GO" id="GO:0001228">
    <property type="term" value="F:DNA-binding transcription activator activity, RNA polymerase II-specific"/>
    <property type="evidence" value="ECO:0000318"/>
    <property type="project" value="GO_Central"/>
</dbReference>
<dbReference type="GO" id="GO:0000978">
    <property type="term" value="F:RNA polymerase II cis-regulatory region sequence-specific DNA binding"/>
    <property type="evidence" value="ECO:0000318"/>
    <property type="project" value="GO_Central"/>
</dbReference>
<dbReference type="GO" id="GO:0030154">
    <property type="term" value="P:cell differentiation"/>
    <property type="evidence" value="ECO:0000318"/>
    <property type="project" value="GO_Central"/>
</dbReference>
<dbReference type="GO" id="GO:0030238">
    <property type="term" value="P:male sex determination"/>
    <property type="evidence" value="ECO:0000318"/>
    <property type="project" value="GO_Central"/>
</dbReference>
<dbReference type="GO" id="GO:0010628">
    <property type="term" value="P:positive regulation of gene expression"/>
    <property type="evidence" value="ECO:0000250"/>
    <property type="project" value="UniProtKB"/>
</dbReference>
<dbReference type="GO" id="GO:0045944">
    <property type="term" value="P:positive regulation of transcription by RNA polymerase II"/>
    <property type="evidence" value="ECO:0000318"/>
    <property type="project" value="GO_Central"/>
</dbReference>
<dbReference type="GO" id="GO:0007548">
    <property type="term" value="P:sex differentiation"/>
    <property type="evidence" value="ECO:0007669"/>
    <property type="project" value="UniProtKB-KW"/>
</dbReference>
<dbReference type="CDD" id="cd22034">
    <property type="entry name" value="HMG-box_SoxA_SRY"/>
    <property type="match status" value="1"/>
</dbReference>
<dbReference type="FunFam" id="1.10.30.10:FF:000002">
    <property type="entry name" value="transcription factor Sox-2"/>
    <property type="match status" value="1"/>
</dbReference>
<dbReference type="Gene3D" id="1.10.30.10">
    <property type="entry name" value="High mobility group box domain"/>
    <property type="match status" value="1"/>
</dbReference>
<dbReference type="InterPro" id="IPR009071">
    <property type="entry name" value="HMG_box_dom"/>
</dbReference>
<dbReference type="InterPro" id="IPR036910">
    <property type="entry name" value="HMG_box_dom_sf"/>
</dbReference>
<dbReference type="InterPro" id="IPR017253">
    <property type="entry name" value="SRY"/>
</dbReference>
<dbReference type="InterPro" id="IPR050140">
    <property type="entry name" value="SRY-related_HMG-box_TF-like"/>
</dbReference>
<dbReference type="PANTHER" id="PTHR10270:SF161">
    <property type="entry name" value="SEX-DETERMINING REGION Y PROTEIN"/>
    <property type="match status" value="1"/>
</dbReference>
<dbReference type="PANTHER" id="PTHR10270">
    <property type="entry name" value="SOX TRANSCRIPTION FACTOR"/>
    <property type="match status" value="1"/>
</dbReference>
<dbReference type="Pfam" id="PF00505">
    <property type="entry name" value="HMG_box"/>
    <property type="match status" value="1"/>
</dbReference>
<dbReference type="PIRSF" id="PIRSF037653">
    <property type="entry name" value="SRY"/>
    <property type="match status" value="1"/>
</dbReference>
<dbReference type="SMART" id="SM00398">
    <property type="entry name" value="HMG"/>
    <property type="match status" value="1"/>
</dbReference>
<dbReference type="SUPFAM" id="SSF47095">
    <property type="entry name" value="HMG-box"/>
    <property type="match status" value="1"/>
</dbReference>
<dbReference type="PROSITE" id="PS50118">
    <property type="entry name" value="HMG_BOX_2"/>
    <property type="match status" value="1"/>
</dbReference>
<evidence type="ECO:0000250" key="1">
    <source>
        <dbReference type="UniProtKB" id="P36394"/>
    </source>
</evidence>
<evidence type="ECO:0000250" key="2">
    <source>
        <dbReference type="UniProtKB" id="Q05066"/>
    </source>
</evidence>
<evidence type="ECO:0000255" key="3">
    <source>
        <dbReference type="PROSITE-ProRule" id="PRU00267"/>
    </source>
</evidence>
<evidence type="ECO:0000256" key="4">
    <source>
        <dbReference type="SAM" id="MobiDB-lite"/>
    </source>
</evidence>
<evidence type="ECO:0000305" key="5"/>